<keyword id="KW-0002">3D-structure</keyword>
<keyword id="KW-0007">Acetylation</keyword>
<keyword id="KW-0025">Alternative splicing</keyword>
<keyword id="KW-0963">Cytoplasm</keyword>
<keyword id="KW-0903">Direct protein sequencing</keyword>
<keyword id="KW-1017">Isopeptide bond</keyword>
<keyword id="KW-0539">Nucleus</keyword>
<keyword id="KW-0597">Phosphoprotein</keyword>
<keyword id="KW-1267">Proteomics identification</keyword>
<keyword id="KW-1185">Reference proteome</keyword>
<keyword id="KW-0678">Repressor</keyword>
<keyword id="KW-0687">Ribonucleoprotein</keyword>
<keyword id="KW-0694">RNA-binding</keyword>
<keyword id="KW-0698">rRNA processing</keyword>
<keyword id="KW-0804">Transcription</keyword>
<keyword id="KW-0805">Transcription regulation</keyword>
<keyword id="KW-0810">Translation regulation</keyword>
<keyword id="KW-0832">Ubl conjugation</keyword>
<protein>
    <recommendedName>
        <fullName>Proliferation-associated protein 2G4</fullName>
    </recommendedName>
    <alternativeName>
        <fullName>Cell cycle protein p38-2G4 homolog</fullName>
        <shortName>hG4-1</shortName>
    </alternativeName>
    <alternativeName>
        <fullName>ErbB3-binding protein 1</fullName>
    </alternativeName>
</protein>
<evidence type="ECO:0000250" key="1">
    <source>
        <dbReference type="UniProtKB" id="P50580"/>
    </source>
</evidence>
<evidence type="ECO:0000250" key="2">
    <source>
        <dbReference type="UniProtKB" id="Q6AYD3"/>
    </source>
</evidence>
<evidence type="ECO:0000256" key="3">
    <source>
        <dbReference type="SAM" id="MobiDB-lite"/>
    </source>
</evidence>
<evidence type="ECO:0000269" key="4">
    <source>
    </source>
</evidence>
<evidence type="ECO:0000269" key="5">
    <source>
    </source>
</evidence>
<evidence type="ECO:0000269" key="6">
    <source>
    </source>
</evidence>
<evidence type="ECO:0000269" key="7">
    <source>
    </source>
</evidence>
<evidence type="ECO:0000269" key="8">
    <source>
    </source>
</evidence>
<evidence type="ECO:0000269" key="9">
    <source>
    </source>
</evidence>
<evidence type="ECO:0000269" key="10">
    <source>
    </source>
</evidence>
<evidence type="ECO:0000269" key="11">
    <source>
    </source>
</evidence>
<evidence type="ECO:0000269" key="12">
    <source>
    </source>
</evidence>
<evidence type="ECO:0000269" key="13">
    <source>
    </source>
</evidence>
<evidence type="ECO:0000269" key="14">
    <source ref="5"/>
</evidence>
<evidence type="ECO:0000303" key="15">
    <source>
    </source>
</evidence>
<evidence type="ECO:0000305" key="16"/>
<evidence type="ECO:0000305" key="17">
    <source>
    </source>
</evidence>
<evidence type="ECO:0000305" key="18">
    <source>
    </source>
</evidence>
<evidence type="ECO:0007744" key="19">
    <source>
    </source>
</evidence>
<evidence type="ECO:0007744" key="20">
    <source>
    </source>
</evidence>
<evidence type="ECO:0007744" key="21">
    <source>
    </source>
</evidence>
<evidence type="ECO:0007744" key="22">
    <source>
    </source>
</evidence>
<evidence type="ECO:0007744" key="23">
    <source>
    </source>
</evidence>
<evidence type="ECO:0007744" key="24">
    <source>
    </source>
</evidence>
<evidence type="ECO:0007744" key="25">
    <source>
    </source>
</evidence>
<evidence type="ECO:0007744" key="26">
    <source>
    </source>
</evidence>
<evidence type="ECO:0007744" key="27">
    <source>
    </source>
</evidence>
<evidence type="ECO:0007744" key="28">
    <source>
    </source>
</evidence>
<evidence type="ECO:0007744" key="29">
    <source>
    </source>
</evidence>
<evidence type="ECO:0007829" key="30">
    <source>
        <dbReference type="PDB" id="2Q8K"/>
    </source>
</evidence>
<evidence type="ECO:0007829" key="31">
    <source>
        <dbReference type="PDB" id="6WM8"/>
    </source>
</evidence>
<name>PA2G4_HUMAN</name>
<reference key="1">
    <citation type="journal article" date="1997" name="Cytogenet. Cell Genet.">
        <title>Molecular cloning and mapping of a human cDNA (PA2G4) that encodes a protein highly homologous to the mouse cell cycle protein p38-2G4.</title>
        <authorList>
            <person name="Lamartine J."/>
            <person name="Seri M."/>
            <person name="Cinti R."/>
            <person name="Heitzmann F."/>
            <person name="Creaven M."/>
            <person name="Radomski N."/>
            <person name="Jost E."/>
            <person name="Lenoir G.M."/>
            <person name="Romeo G."/>
            <person name="Sylla B.S."/>
        </authorList>
    </citation>
    <scope>NUCLEOTIDE SEQUENCE [MRNA] (ISOFORM 1)</scope>
</reference>
<reference key="2">
    <citation type="journal article" date="2000" name="Br. J. Cancer">
        <title>Interaction of the PA2G4 (EBP1) protein with ErbB-3 and regulation of this binding by heregulin.</title>
        <authorList>
            <person name="Yoo J.Y."/>
            <person name="Wang X.W."/>
            <person name="Rishi A.K."/>
            <person name="Lessor T."/>
            <person name="Xia X.M."/>
            <person name="Gustafson T.A."/>
            <person name="Hamburger A.W."/>
        </authorList>
    </citation>
    <scope>NUCLEOTIDE SEQUENCE [MRNA] (ISOFORM 2)</scope>
    <scope>INTERACTION WITH ERBB3</scope>
    <scope>SUBCELLULAR LOCATION</scope>
    <scope>TISSUE SPECIFICITY</scope>
    <source>
        <tissue>Brain</tissue>
    </source>
</reference>
<reference key="3">
    <citation type="submission" date="1998-11" db="EMBL/GenBank/DDBJ databases">
        <title>Genomic structure of the human PA2G4 gene.</title>
        <authorList>
            <person name="Caroli F."/>
            <person name="Lamartine J."/>
            <person name="Sylla B.S."/>
            <person name="Romeo G."/>
            <person name="Seri M."/>
        </authorList>
    </citation>
    <scope>NUCLEOTIDE SEQUENCE [GENOMIC DNA]</scope>
</reference>
<reference key="4">
    <citation type="journal article" date="2004" name="Genome Res.">
        <title>The status, quality, and expansion of the NIH full-length cDNA project: the Mammalian Gene Collection (MGC).</title>
        <authorList>
            <consortium name="The MGC Project Team"/>
        </authorList>
    </citation>
    <scope>NUCLEOTIDE SEQUENCE [LARGE SCALE MRNA] (ISOFORM 1)</scope>
    <source>
        <tissue>Lung</tissue>
        <tissue>Skin</tissue>
    </source>
</reference>
<reference key="5">
    <citation type="submission" date="2010-01" db="UniProtKB">
        <authorList>
            <person name="Bienvenut W.V."/>
            <person name="Matallanas D."/>
            <person name="Cooper W.N."/>
            <person name="Boldt K."/>
            <person name="von Kriegsheim A.F."/>
            <person name="Kolch W."/>
        </authorList>
    </citation>
    <scope>PROTEIN SEQUENCE OF 2-20; 23-30; 34-62; 73-101; 156-172; 200-211; 216-236; 264-281 AND 299-364</scope>
    <scope>CLEAVAGE OF INITIATOR METHIONINE</scope>
    <scope>ACETYLATION AT SER-2</scope>
    <scope>IDENTIFICATION BY MASS SPECTROMETRY</scope>
    <source>
        <tissue>B-cell lymphoma</tissue>
        <tissue>Mammary carcinoma</tissue>
        <tissue>Ovarian carcinoma</tissue>
    </source>
</reference>
<reference key="6">
    <citation type="submission" date="2008-12" db="UniProtKB">
        <authorList>
            <person name="Lubec G."/>
            <person name="Afjehi-Sadat L."/>
            <person name="Chen W.-Q."/>
            <person name="Sun Y."/>
        </authorList>
    </citation>
    <scope>PROTEIN SEQUENCE OF 34-51; 216-236; 264-271; 299-311; 333-344 AND 377-394</scope>
    <scope>IDENTIFICATION BY MASS SPECTROMETRY</scope>
    <source>
        <tissue>Brain</tissue>
        <tissue>Cajal-Retzius cell</tissue>
        <tissue>Fetal brain cortex</tissue>
    </source>
</reference>
<reference key="7">
    <citation type="journal article" date="2001" name="Mol. Cell. Endocrinol.">
        <title>Regulation of the ErbB3 binding protein Ebp1 by protein kinase C.</title>
        <authorList>
            <person name="Lessor T.J."/>
            <person name="Hamburger A.W."/>
        </authorList>
    </citation>
    <scope>INTERACTION WITH ERBB3</scope>
    <scope>PHOSPHORYLATION</scope>
    <scope>PHOSPHORYLATION BY PKC</scope>
    <scope>PHOSPHORYLATION AT THR-366</scope>
    <scope>MUTAGENESIS OF SER-363 AND THR-366</scope>
</reference>
<reference key="8">
    <citation type="journal article" date="2001" name="J. Cell. Physiol.">
        <title>Ebp1, an ErbB-3 binding protein, interacts with Rb and affects Rb transcriptional regulation.</title>
        <authorList>
            <person name="Xia X."/>
            <person name="Cheng A."/>
            <person name="Lessor T."/>
            <person name="Zhang Y."/>
            <person name="Hamburger A.W."/>
        </authorList>
    </citation>
    <scope>FUNCTION IN TRANSCRIPTION REPRESSION</scope>
    <scope>INTERACTION WITH RB1</scope>
</reference>
<reference key="9">
    <citation type="journal article" date="2002" name="Mol. Biol. Cell">
        <title>Functional proteomic analysis of human nucleolus.</title>
        <authorList>
            <person name="Scherl A."/>
            <person name="Coute Y."/>
            <person name="Deon C."/>
            <person name="Calle A."/>
            <person name="Kindbeiter K."/>
            <person name="Sanchez J.-C."/>
            <person name="Greco A."/>
            <person name="Hochstrasser D.F."/>
            <person name="Diaz J.-J."/>
        </authorList>
    </citation>
    <scope>SUBCELLULAR LOCATION [LARGE SCALE ANALYSIS]</scope>
    <source>
        <tissue>Cervix carcinoma</tissue>
    </source>
</reference>
<reference key="10">
    <citation type="journal article" date="2003" name="Nucleic Acids Res.">
        <title>Repression of E2F1-mediated transcription by the ErbB3 binding protein Ebp1 involves histone deacetylases.</title>
        <authorList>
            <person name="Zhang Y."/>
            <person name="Woodford N."/>
            <person name="Xia X."/>
            <person name="Hamburger A.W."/>
        </authorList>
    </citation>
    <scope>FUNCTION IN E2F1-MEDIATED TRANSCRIPTION REPRESSION</scope>
    <scope>INTERACTION WITH HDAC2</scope>
</reference>
<reference key="11">
    <citation type="journal article" date="2004" name="Oncogene">
        <title>EBP1 is a nucleolar growth-regulating protein that is part of pre-ribosomal ribonucleoprotein complexes.</title>
        <authorList>
            <person name="Squatrito M."/>
            <person name="Mancino M."/>
            <person name="Donzelli M."/>
            <person name="Areces L.B."/>
            <person name="Draetta G.F."/>
        </authorList>
    </citation>
    <scope>FUNCTION IN RRNA PROCESSING</scope>
    <scope>SUBCELLULAR LOCATION</scope>
    <scope>TISSUE SPECIFICITY</scope>
    <scope>RNA-BINDING</scope>
    <scope>IDENTIFICATION IN A RIBONUCLEOPROTEIN COMPLEX</scope>
    <scope>ASSOCIATION WITH RRNA</scope>
    <scope>ASSOCIATION WITH U3 SNORNA</scope>
    <scope>MUTAGENESIS OF 20-LYS--LYS-22 AND 364-ARG-LYS-365</scope>
</reference>
<reference key="12">
    <citation type="journal article" date="2005" name="Br. J. Cancer">
        <title>Specificity and heregulin regulation of Ebp1 (ErbB3 binding protein 1) mediated repression of androgen receptor signalling.</title>
        <authorList>
            <person name="Zhang Y."/>
            <person name="Hamburger A.W."/>
        </authorList>
    </citation>
    <scope>FUNCTION IN TRANSCRIPTION REPRESSION</scope>
    <scope>INTERACTION WITH ERBB3 AND AR</scope>
</reference>
<reference key="13">
    <citation type="journal article" date="2006" name="Cell">
        <title>Global, in vivo, and site-specific phosphorylation dynamics in signaling networks.</title>
        <authorList>
            <person name="Olsen J.V."/>
            <person name="Blagoev B."/>
            <person name="Gnad F."/>
            <person name="Macek B."/>
            <person name="Kumar C."/>
            <person name="Mortensen P."/>
            <person name="Mann M."/>
        </authorList>
    </citation>
    <scope>PHOSPHORYLATION [LARGE SCALE ANALYSIS] AT SER-2 AND THR-386</scope>
    <scope>IDENTIFICATION BY MASS SPECTROMETRY [LARGE SCALE ANALYSIS]</scope>
    <source>
        <tissue>Cervix carcinoma</tissue>
    </source>
</reference>
<reference key="14">
    <citation type="journal article" date="2006" name="Nat. Biotechnol.">
        <title>A probability-based approach for high-throughput protein phosphorylation analysis and site localization.</title>
        <authorList>
            <person name="Beausoleil S.A."/>
            <person name="Villen J."/>
            <person name="Gerber S.A."/>
            <person name="Rush J."/>
            <person name="Gygi S.P."/>
        </authorList>
    </citation>
    <scope>PHOSPHORYLATION [LARGE SCALE ANALYSIS] AT THR-386</scope>
    <scope>IDENTIFICATION BY MASS SPECTROMETRY [LARGE SCALE ANALYSIS]</scope>
    <source>
        <tissue>Cervix carcinoma</tissue>
    </source>
</reference>
<reference key="15">
    <citation type="journal article" date="2006" name="Proc. Natl. Acad. Sci. U.S.A.">
        <title>Ebp1 isoforms distinctively regulate cell survival and differentiation.</title>
        <authorList>
            <person name="Liu Z."/>
            <person name="Ahn J.Y."/>
            <person name="Liu X."/>
            <person name="Ye K."/>
        </authorList>
    </citation>
    <scope>ALTERNATIVE SPLICING (ISOFORMS 1 AND 2)</scope>
    <scope>SUBCELLULAR LOCATION</scope>
    <scope>INTERACTION WITH ERBB3</scope>
    <scope>PHOSPHORYLATION AT SER-361</scope>
    <scope>MUTAGENESIS OF SER-361</scope>
</reference>
<reference key="16">
    <citation type="journal article" date="2008" name="Proc. Natl. Acad. Sci. U.S.A.">
        <title>A quantitative atlas of mitotic phosphorylation.</title>
        <authorList>
            <person name="Dephoure N."/>
            <person name="Zhou C."/>
            <person name="Villen J."/>
            <person name="Beausoleil S.A."/>
            <person name="Bakalarski C.E."/>
            <person name="Elledge S.J."/>
            <person name="Gygi S.P."/>
        </authorList>
    </citation>
    <scope>PHOSPHORYLATION [LARGE SCALE ANALYSIS] AT SER-361 AND THR-386</scope>
    <scope>IDENTIFICATION BY MASS SPECTROMETRY [LARGE SCALE ANALYSIS]</scope>
    <source>
        <tissue>Cervix carcinoma</tissue>
    </source>
</reference>
<reference key="17">
    <citation type="journal article" date="2009" name="Anal. Chem.">
        <title>Lys-N and trypsin cover complementary parts of the phosphoproteome in a refined SCX-based approach.</title>
        <authorList>
            <person name="Gauci S."/>
            <person name="Helbig A.O."/>
            <person name="Slijper M."/>
            <person name="Krijgsveld J."/>
            <person name="Heck A.J."/>
            <person name="Mohammed S."/>
        </authorList>
    </citation>
    <scope>ACETYLATION [LARGE SCALE ANALYSIS] AT SER-2</scope>
    <scope>CLEAVAGE OF INITIATOR METHIONINE [LARGE SCALE ANALYSIS]</scope>
    <scope>IDENTIFICATION BY MASS SPECTROMETRY [LARGE SCALE ANALYSIS]</scope>
</reference>
<reference key="18">
    <citation type="journal article" date="2009" name="Mol. Biol. Cell">
        <title>Human BRE1 is an E3 ubiquitin ligase for Ebp1 tumor suppressor.</title>
        <authorList>
            <person name="Liu Z."/>
            <person name="Oh S.M."/>
            <person name="Okada M."/>
            <person name="Liu X."/>
            <person name="Cheng D."/>
            <person name="Peng J."/>
            <person name="Brat D.J."/>
            <person name="Sun S.Y."/>
            <person name="Zhou W."/>
            <person name="Gu W."/>
            <person name="Ye K."/>
        </authorList>
    </citation>
    <scope>POLYUBIQUITINATION</scope>
    <scope>SUBCELLULAR LOCATION</scope>
    <scope>INTERACTION WITH RNF20 AND HUWE1</scope>
    <scope>TISSUE SPECIFICITY</scope>
    <scope>MUTAGENESIS OF SER-361</scope>
</reference>
<reference key="19">
    <citation type="journal article" date="2009" name="Sci. Signal.">
        <title>Quantitative phosphoproteomic analysis of T cell receptor signaling reveals system-wide modulation of protein-protein interactions.</title>
        <authorList>
            <person name="Mayya V."/>
            <person name="Lundgren D.H."/>
            <person name="Hwang S.-I."/>
            <person name="Rezaul K."/>
            <person name="Wu L."/>
            <person name="Eng J.K."/>
            <person name="Rodionov V."/>
            <person name="Han D.K."/>
        </authorList>
    </citation>
    <scope>PHOSPHORYLATION [LARGE SCALE ANALYSIS] AT THR-386</scope>
    <scope>IDENTIFICATION BY MASS SPECTROMETRY [LARGE SCALE ANALYSIS]</scope>
    <source>
        <tissue>Leukemic T-cell</tissue>
    </source>
</reference>
<reference key="20">
    <citation type="journal article" date="2010" name="Sci. Signal.">
        <title>Quantitative phosphoproteomics reveals widespread full phosphorylation site occupancy during mitosis.</title>
        <authorList>
            <person name="Olsen J.V."/>
            <person name="Vermeulen M."/>
            <person name="Santamaria A."/>
            <person name="Kumar C."/>
            <person name="Miller M.L."/>
            <person name="Jensen L.J."/>
            <person name="Gnad F."/>
            <person name="Cox J."/>
            <person name="Jensen T.S."/>
            <person name="Nigg E.A."/>
            <person name="Brunak S."/>
            <person name="Mann M."/>
        </authorList>
    </citation>
    <scope>ACETYLATION [LARGE SCALE ANALYSIS] AT SER-2</scope>
    <scope>PHOSPHORYLATION [LARGE SCALE ANALYSIS] AT SER-2; SER-361 AND THR-386</scope>
    <scope>CLEAVAGE OF INITIATOR METHIONINE [LARGE SCALE ANALYSIS]</scope>
    <scope>IDENTIFICATION BY MASS SPECTROMETRY [LARGE SCALE ANALYSIS]</scope>
    <source>
        <tissue>Cervix carcinoma</tissue>
    </source>
</reference>
<reference key="21">
    <citation type="journal article" date="2011" name="BMC Syst. Biol.">
        <title>Initial characterization of the human central proteome.</title>
        <authorList>
            <person name="Burkard T.R."/>
            <person name="Planyavsky M."/>
            <person name="Kaupe I."/>
            <person name="Breitwieser F.P."/>
            <person name="Buerckstuemmer T."/>
            <person name="Bennett K.L."/>
            <person name="Superti-Furga G."/>
            <person name="Colinge J."/>
        </authorList>
    </citation>
    <scope>IDENTIFICATION BY MASS SPECTROMETRY [LARGE SCALE ANALYSIS]</scope>
</reference>
<reference key="22">
    <citation type="journal article" date="2011" name="Sci. Signal.">
        <title>System-wide temporal characterization of the proteome and phosphoproteome of human embryonic stem cell differentiation.</title>
        <authorList>
            <person name="Rigbolt K.T."/>
            <person name="Prokhorova T.A."/>
            <person name="Akimov V."/>
            <person name="Henningsen J."/>
            <person name="Johansen P.T."/>
            <person name="Kratchmarova I."/>
            <person name="Kassem M."/>
            <person name="Mann M."/>
            <person name="Olsen J.V."/>
            <person name="Blagoev B."/>
        </authorList>
    </citation>
    <scope>ACETYLATION [LARGE SCALE ANALYSIS] AT SER-2</scope>
    <scope>PHOSPHORYLATION [LARGE SCALE ANALYSIS] AT SER-2 AND THR-386</scope>
    <scope>CLEAVAGE OF INITIATOR METHIONINE [LARGE SCALE ANALYSIS]</scope>
    <scope>IDENTIFICATION BY MASS SPECTROMETRY [LARGE SCALE ANALYSIS]</scope>
</reference>
<reference key="23">
    <citation type="journal article" date="2012" name="Mol. Cell. Proteomics">
        <title>Comparative large-scale characterisation of plant vs. mammal proteins reveals similar and idiosyncratic N-alpha acetylation features.</title>
        <authorList>
            <person name="Bienvenut W.V."/>
            <person name="Sumpton D."/>
            <person name="Martinez A."/>
            <person name="Lilla S."/>
            <person name="Espagne C."/>
            <person name="Meinnel T."/>
            <person name="Giglione C."/>
        </authorList>
    </citation>
    <scope>ACETYLATION [LARGE SCALE ANALYSIS] AT SER-2</scope>
    <scope>CLEAVAGE OF INITIATOR METHIONINE [LARGE SCALE ANALYSIS]</scope>
    <scope>IDENTIFICATION BY MASS SPECTROMETRY [LARGE SCALE ANALYSIS]</scope>
</reference>
<reference key="24">
    <citation type="journal article" date="2012" name="Proc. Natl. Acad. Sci. U.S.A.">
        <title>N-terminal acetylome analyses and functional insights of the N-terminal acetyltransferase NatB.</title>
        <authorList>
            <person name="Van Damme P."/>
            <person name="Lasa M."/>
            <person name="Polevoda B."/>
            <person name="Gazquez C."/>
            <person name="Elosegui-Artola A."/>
            <person name="Kim D.S."/>
            <person name="De Juan-Pardo E."/>
            <person name="Demeyer K."/>
            <person name="Hole K."/>
            <person name="Larrea E."/>
            <person name="Timmerman E."/>
            <person name="Prieto J."/>
            <person name="Arnesen T."/>
            <person name="Sherman F."/>
            <person name="Gevaert K."/>
            <person name="Aldabe R."/>
        </authorList>
    </citation>
    <scope>ACETYLATION [LARGE SCALE ANALYSIS] AT SER-2</scope>
    <scope>CLEAVAGE OF INITIATOR METHIONINE [LARGE SCALE ANALYSIS]</scope>
    <scope>IDENTIFICATION BY MASS SPECTROMETRY [LARGE SCALE ANALYSIS]</scope>
</reference>
<reference key="25">
    <citation type="journal article" date="2013" name="J. Proteome Res.">
        <title>Toward a comprehensive characterization of a human cancer cell phosphoproteome.</title>
        <authorList>
            <person name="Zhou H."/>
            <person name="Di Palma S."/>
            <person name="Preisinger C."/>
            <person name="Peng M."/>
            <person name="Polat A.N."/>
            <person name="Heck A.J."/>
            <person name="Mohammed S."/>
        </authorList>
    </citation>
    <scope>PHOSPHORYLATION [LARGE SCALE ANALYSIS] AT SER-2; SER-335 AND SER-361</scope>
    <scope>IDENTIFICATION BY MASS SPECTROMETRY [LARGE SCALE ANALYSIS]</scope>
    <source>
        <tissue>Cervix carcinoma</tissue>
        <tissue>Erythroleukemia</tissue>
    </source>
</reference>
<reference key="26">
    <citation type="journal article" date="2014" name="J. Proteomics">
        <title>An enzyme assisted RP-RPLC approach for in-depth analysis of human liver phosphoproteome.</title>
        <authorList>
            <person name="Bian Y."/>
            <person name="Song C."/>
            <person name="Cheng K."/>
            <person name="Dong M."/>
            <person name="Wang F."/>
            <person name="Huang J."/>
            <person name="Sun D."/>
            <person name="Wang L."/>
            <person name="Ye M."/>
            <person name="Zou H."/>
        </authorList>
    </citation>
    <scope>IDENTIFICATION BY MASS SPECTROMETRY [LARGE SCALE ANALYSIS]</scope>
    <source>
        <tissue>Liver</tissue>
    </source>
</reference>
<reference key="27">
    <citation type="journal article" date="2015" name="Proteomics">
        <title>N-terminome analysis of the human mitochondrial proteome.</title>
        <authorList>
            <person name="Vaca Jacome A.S."/>
            <person name="Rabilloud T."/>
            <person name="Schaeffer-Reiss C."/>
            <person name="Rompais M."/>
            <person name="Ayoub D."/>
            <person name="Lane L."/>
            <person name="Bairoch A."/>
            <person name="Van Dorsselaer A."/>
            <person name="Carapito C."/>
        </authorList>
    </citation>
    <scope>IDENTIFICATION BY MASS SPECTROMETRY [LARGE SCALE ANALYSIS]</scope>
</reference>
<reference key="28">
    <citation type="journal article" date="2016" name="Am. J. Hum. Genet.">
        <title>DNAJC21 mutations link a cancer-prone bone marrow failure syndrome to corruption in 60S ribosome subunit maturation.</title>
        <authorList>
            <person name="Tummala H."/>
            <person name="Walne A.J."/>
            <person name="Williams M."/>
            <person name="Bockett N."/>
            <person name="Collopy L."/>
            <person name="Cardoso S."/>
            <person name="Ellison A."/>
            <person name="Wynn R."/>
            <person name="Leblanc T."/>
            <person name="Fitzgibbon J."/>
            <person name="Kelsell D.P."/>
            <person name="van Heel D.A."/>
            <person name="Payne E."/>
            <person name="Plagnol V."/>
            <person name="Dokal I."/>
            <person name="Vulliamy T."/>
        </authorList>
    </citation>
    <scope>INTERACTION WITH DNAJC21</scope>
</reference>
<reference key="29">
    <citation type="journal article" date="2017" name="Nat. Struct. Mol. Biol.">
        <title>Site-specific mapping of the human SUMO proteome reveals co-modification with phosphorylation.</title>
        <authorList>
            <person name="Hendriks I.A."/>
            <person name="Lyon D."/>
            <person name="Young C."/>
            <person name="Jensen L.J."/>
            <person name="Vertegaal A.C."/>
            <person name="Nielsen M.L."/>
        </authorList>
    </citation>
    <scope>SUMOYLATION [LARGE SCALE ANALYSIS] AT LYS-298</scope>
    <scope>IDENTIFICATION BY MASS SPECTROMETRY [LARGE SCALE ANALYSIS]</scope>
</reference>
<reference key="30">
    <citation type="journal article" date="2007" name="FEBS Lett.">
        <title>The crystal structure of Ebp1 reveals a methionine aminopeptidase fold as binding platform for multiple interactions.</title>
        <authorList>
            <person name="Kowalinski E."/>
            <person name="Bange G."/>
            <person name="Bradatsch B."/>
            <person name="Hurt E."/>
            <person name="Wild K."/>
            <person name="Sinning I."/>
        </authorList>
    </citation>
    <scope>X-RAY CRYSTALLOGRAPHY (1.6 ANGSTROMS)</scope>
    <scope>INTERACTION WITH 5S RIBOSOMAL RNA</scope>
    <scope>LACK OF AMINOPEPTIDASE ACTIVITY</scope>
</reference>
<sequence>MSGEDEQQEQTIAEDLVVTKYKMGGDIANRVLRSLVEASSSGVSVLSLCEKGDAMIMEETGKIFKKEKEMKKGIAFPTSISVNNCVCHFSPLKSDQDYILKEGDLVKIDLGVHVDGFIANVAHTFVVDVAQGTQVTGRKADVIKAAHLCAEAALRLVKPGNQNTQVTEAWNKVAHSFNCTPIEGMLSHQLKQHVIDGEKTIIQNPTDQQKKDHEKAEFEVHEVYAVDVLVSSGEGKAKDAGQRTTIYKRDPSKQYGLKMKTSRAFFSEVERRFDAMPFTLRAFEDEKKARMGVVECAKHELLQPFNVLYEKEGEFVAQFKFTVLLMPNGPMRITSGPFEPDLYKSEMEVQDAELKALLQSSASRKTQKKKKKKASKTAENATSGETLEENEAGD</sequence>
<accession>Q9UQ80</accession>
<accession>O43846</accession>
<accession>Q9UM59</accession>
<proteinExistence type="evidence at protein level"/>
<gene>
    <name type="primary">PA2G4</name>
    <name type="synonym">EBP1</name>
</gene>
<comment type="function">
    <text evidence="1 2 5 7 8 9 10">May play a role in a ERBB3-regulated signal transduction pathway. Seems be involved in growth regulation. Acts a corepressor of the androgen receptor (AR) and is regulated by the ERBB3 ligand neuregulin-1/heregulin (HRG). Inhibits transcription of some E2F1-regulated promoters, probably by recruiting histone acetylase (HAT) activity. Binds RNA. Associates with 28S, 18S and 5.8S mature rRNAs, several rRNA precursors and probably U3 small nucleolar RNA. May be involved in regulation of intermediate and late steps of rRNA processing. May be involved in ribosome assembly. Mediates cap-independent translation of specific viral IRESs (internal ribosomal entry site) (By similarity). Regulates cell proliferation, differentiation, and survival. Isoform 1 suppresses apoptosis whereas isoform 2 promotes cell differentiation (By similarity).</text>
</comment>
<comment type="subunit">
    <text evidence="2 4 5 6 7 8 9 10 11 12 13">Isoform 2 interacts with the cytoplasmic domain of non-phosphorylated ERBB3; the interaction requires PKC activity. Interacts with AR. Treatment with HRG leads to dissociation from ERBB3 and increases association with AR. Interacts with NCL/nucleolin. Component of a ribonucleoprotein complex containing at least PA2G4, NCL, TOP1, PABPC2, RPLP0, acetylated histone H1 (HIST1H1A or H1F1), histone H1 2/4, RPL4, RPL8, RPL15, RPL18, RPL18A, RPL21, RPL11, RPL12, RPL28, RPL27, RPLP2 and RPL24. Interacts with HDAC2. Interacts with RB1; the interaction is enhanced upon PA2G4 dephosphorylation. Interacts with AKT1 (By similarity). Isoform 1 and isoform 2 interact with RNF20. Isoform 2 interacts with HUWE1. Interacts with DNAJC21 (PubMed:27346687).</text>
</comment>
<comment type="interaction">
    <interactant intactId="EBI-924893">
        <id>Q9UQ80</id>
    </interactant>
    <interactant intactId="EBI-346967">
        <id>P19338</id>
        <label>NCL</label>
    </interactant>
    <organismsDiffer>false</organismsDiffer>
    <experiments>2</experiments>
</comment>
<comment type="interaction">
    <interactant intactId="EBI-924893">
        <id>Q9UQ80</id>
    </interactant>
    <interactant intactId="EBI-491274">
        <id>P06400</id>
        <label>RB1</label>
    </interactant>
    <organismsDiffer>false</organismsDiffer>
    <experiments>4</experiments>
</comment>
<comment type="interaction">
    <interactant intactId="EBI-924893">
        <id>Q9UQ80</id>
    </interactant>
    <interactant intactId="EBI-347218">
        <id>Q96ST3</id>
        <label>SIN3A</label>
    </interactant>
    <organismsDiffer>false</organismsDiffer>
    <experiments>4</experiments>
</comment>
<comment type="interaction">
    <interactant intactId="EBI-924893">
        <id>Q9UQ80</id>
    </interactant>
    <interactant intactId="EBI-2561467">
        <id>Q9Y3B3</id>
        <label>TMED7</label>
    </interactant>
    <organismsDiffer>false</organismsDiffer>
    <experiments>3</experiments>
</comment>
<comment type="subcellular location">
    <molecule>Isoform 1</molecule>
    <subcellularLocation>
        <location evidence="10 12">Cytoplasm</location>
    </subcellularLocation>
    <subcellularLocation>
        <location evidence="10 12">Nucleus</location>
        <location evidence="10 12">Nucleolus</location>
    </subcellularLocation>
    <text evidence="10">Translocates to the nucleus upon treatment with HRG. Phosphorylation at Ser-361 by PKC/PRKCD regulates its nucleolar localization.</text>
</comment>
<comment type="subcellular location">
    <molecule>Isoform 2</molecule>
    <subcellularLocation>
        <location evidence="10 12">Cytoplasm</location>
    </subcellularLocation>
</comment>
<comment type="alternative products">
    <event type="alternative splicing"/>
    <isoform>
        <id>Q9UQ80-1</id>
        <name evidence="16">1</name>
        <name evidence="15">p48</name>
        <sequence type="displayed"/>
    </isoform>
    <isoform>
        <id>Q9UQ80-2</id>
        <name evidence="16">2</name>
        <name evidence="15">p42</name>
        <sequence type="described" ref="VSP_057325"/>
    </isoform>
</comment>
<comment type="tissue specificity">
    <text evidence="4 8 12">Isoform 2 is undetectable whereas isoform 1 is strongly expressed in cancer cells (at protein level). Isoform 1 and isoform 2 are widely expressed, including heart, brain, lung, pancreas, skeletal muscle, kidney, placenta and liver.</text>
</comment>
<comment type="PTM">
    <text evidence="6 10 12">Phosphorylated on serine and threonine residues. Phosphorylation is enhanced by HRG treatment. Basal phosphorylation is PKC-dependent and HRG-induced phosphorylation is predominantly PKC-independent. Phosphorylation at Ser-361 by PKC/PRKCD regulates its nucleolar localization.</text>
</comment>
<comment type="PTM">
    <text evidence="12">In cancer cells, isoform 2 is polyubiquitinated leading to its proteasomal degradation and phosphorylation by PKC/PRKCD enhances polyubiquitination.</text>
</comment>
<comment type="similarity">
    <text evidence="16">Belongs to the peptidase M24 family.</text>
</comment>
<comment type="caution">
    <text evidence="18">Although it belongs to the peptidase M24 family, it does not contain metal cofactors and lacks aminopeptidase activity.</text>
</comment>
<comment type="online information" name="Atlas of Genetics and Cytogenetics in Oncology and Haematology">
    <link uri="https://atlasgeneticsoncology.org/gene/41628/PA2G4"/>
</comment>
<organism>
    <name type="scientific">Homo sapiens</name>
    <name type="common">Human</name>
    <dbReference type="NCBI Taxonomy" id="9606"/>
    <lineage>
        <taxon>Eukaryota</taxon>
        <taxon>Metazoa</taxon>
        <taxon>Chordata</taxon>
        <taxon>Craniata</taxon>
        <taxon>Vertebrata</taxon>
        <taxon>Euteleostomi</taxon>
        <taxon>Mammalia</taxon>
        <taxon>Eutheria</taxon>
        <taxon>Euarchontoglires</taxon>
        <taxon>Primates</taxon>
        <taxon>Haplorrhini</taxon>
        <taxon>Catarrhini</taxon>
        <taxon>Hominidae</taxon>
        <taxon>Homo</taxon>
    </lineage>
</organism>
<dbReference type="EMBL" id="U59435">
    <property type="protein sequence ID" value="AAB91536.1"/>
    <property type="molecule type" value="mRNA"/>
</dbReference>
<dbReference type="EMBL" id="U87954">
    <property type="protein sequence ID" value="AAD00646.1"/>
    <property type="molecule type" value="mRNA"/>
</dbReference>
<dbReference type="EMBL" id="AF104670">
    <property type="protein sequence ID" value="AAD05561.1"/>
    <property type="molecule type" value="Genomic_DNA"/>
</dbReference>
<dbReference type="EMBL" id="AF104668">
    <property type="protein sequence ID" value="AAD05561.1"/>
    <property type="status" value="JOINED"/>
    <property type="molecule type" value="Genomic_DNA"/>
</dbReference>
<dbReference type="EMBL" id="AF104669">
    <property type="protein sequence ID" value="AAD05561.1"/>
    <property type="status" value="JOINED"/>
    <property type="molecule type" value="Genomic_DNA"/>
</dbReference>
<dbReference type="EMBL" id="BC001951">
    <property type="protein sequence ID" value="AAH01951.1"/>
    <property type="molecule type" value="mRNA"/>
</dbReference>
<dbReference type="EMBL" id="BC007561">
    <property type="protein sequence ID" value="AAH07561.1"/>
    <property type="molecule type" value="mRNA"/>
</dbReference>
<dbReference type="EMBL" id="BC069786">
    <property type="protein sequence ID" value="AAH69786.1"/>
    <property type="molecule type" value="mRNA"/>
</dbReference>
<dbReference type="CCDS" id="CCDS8902.1">
    <molecule id="Q9UQ80-1"/>
</dbReference>
<dbReference type="RefSeq" id="NP_006182.2">
    <molecule id="Q9UQ80-1"/>
    <property type="nucleotide sequence ID" value="NM_006191.3"/>
</dbReference>
<dbReference type="PDB" id="2Q8K">
    <property type="method" value="X-ray"/>
    <property type="resolution" value="1.60 A"/>
    <property type="chains" value="A=2-394"/>
</dbReference>
<dbReference type="PDB" id="3J2I">
    <property type="method" value="EM"/>
    <property type="resolution" value="11.90 A"/>
    <property type="chains" value="A=1-394"/>
</dbReference>
<dbReference type="PDB" id="6CHT">
    <property type="method" value="X-ray"/>
    <property type="resolution" value="3.17 A"/>
    <property type="chains" value="C/F/I/L=349-368"/>
</dbReference>
<dbReference type="PDB" id="6LSR">
    <property type="method" value="EM"/>
    <property type="resolution" value="3.13 A"/>
    <property type="chains" value="z=1-394"/>
</dbReference>
<dbReference type="PDB" id="6SXO">
    <property type="method" value="EM"/>
    <property type="resolution" value="3.30 A"/>
    <property type="chains" value="A=1-394"/>
</dbReference>
<dbReference type="PDB" id="6WM8">
    <property type="method" value="X-ray"/>
    <property type="resolution" value="2.60 A"/>
    <property type="chains" value="A/B/C=2-362"/>
</dbReference>
<dbReference type="PDB" id="6Z6L">
    <property type="method" value="EM"/>
    <property type="resolution" value="3.00 A"/>
    <property type="chains" value="CA=1-394"/>
</dbReference>
<dbReference type="PDB" id="6Z6M">
    <property type="method" value="EM"/>
    <property type="resolution" value="3.10 A"/>
    <property type="chains" value="CA=1-394"/>
</dbReference>
<dbReference type="PDB" id="6Z6N">
    <property type="method" value="EM"/>
    <property type="resolution" value="2.90 A"/>
    <property type="chains" value="CA=1-394"/>
</dbReference>
<dbReference type="PDB" id="6ZM7">
    <property type="method" value="EM"/>
    <property type="resolution" value="2.70 A"/>
    <property type="chains" value="CA=1-394"/>
</dbReference>
<dbReference type="PDB" id="6ZME">
    <property type="method" value="EM"/>
    <property type="resolution" value="3.00 A"/>
    <property type="chains" value="CA=1-394"/>
</dbReference>
<dbReference type="PDB" id="6ZMI">
    <property type="method" value="EM"/>
    <property type="resolution" value="2.60 A"/>
    <property type="chains" value="CA=1-394"/>
</dbReference>
<dbReference type="PDB" id="6ZMO">
    <property type="method" value="EM"/>
    <property type="resolution" value="3.10 A"/>
    <property type="chains" value="CA=1-394"/>
</dbReference>
<dbReference type="PDB" id="7BHP">
    <property type="method" value="EM"/>
    <property type="resolution" value="3.30 A"/>
    <property type="chains" value="A=1-394"/>
</dbReference>
<dbReference type="PDB" id="8K2C">
    <property type="method" value="EM"/>
    <property type="resolution" value="2.40 A"/>
    <property type="chains" value="CA=1-394"/>
</dbReference>
<dbReference type="PDB" id="8XSX">
    <property type="method" value="EM"/>
    <property type="resolution" value="2.40 A"/>
    <property type="chains" value="CA=1-394"/>
</dbReference>
<dbReference type="PDB" id="8XSY">
    <property type="method" value="EM"/>
    <property type="resolution" value="3.00 A"/>
    <property type="chains" value="CA=1-394"/>
</dbReference>
<dbReference type="PDB" id="8XSZ">
    <property type="method" value="EM"/>
    <property type="resolution" value="3.20 A"/>
    <property type="chains" value="CA=1-394"/>
</dbReference>
<dbReference type="PDBsum" id="2Q8K"/>
<dbReference type="PDBsum" id="3J2I"/>
<dbReference type="PDBsum" id="6CHT"/>
<dbReference type="PDBsum" id="6LSR"/>
<dbReference type="PDBsum" id="6SXO"/>
<dbReference type="PDBsum" id="6WM8"/>
<dbReference type="PDBsum" id="6Z6L"/>
<dbReference type="PDBsum" id="6Z6M"/>
<dbReference type="PDBsum" id="6Z6N"/>
<dbReference type="PDBsum" id="6ZM7"/>
<dbReference type="PDBsum" id="6ZME"/>
<dbReference type="PDBsum" id="6ZMI"/>
<dbReference type="PDBsum" id="6ZMO"/>
<dbReference type="PDBsum" id="7BHP"/>
<dbReference type="PDBsum" id="8K2C"/>
<dbReference type="PDBsum" id="8XSX"/>
<dbReference type="PDBsum" id="8XSY"/>
<dbReference type="PDBsum" id="8XSZ"/>
<dbReference type="EMDB" id="EMD-0963"/>
<dbReference type="EMDB" id="EMD-10344"/>
<dbReference type="EMDB" id="EMD-11098"/>
<dbReference type="EMDB" id="EMD-11099"/>
<dbReference type="EMDB" id="EMD-11100"/>
<dbReference type="EMDB" id="EMD-11288"/>
<dbReference type="EMDB" id="EMD-11289"/>
<dbReference type="EMDB" id="EMD-11292"/>
<dbReference type="EMDB" id="EMD-11299"/>
<dbReference type="EMDB" id="EMD-12189"/>
<dbReference type="EMDB" id="EMD-36838"/>
<dbReference type="EMDB" id="EMD-38629"/>
<dbReference type="EMDB" id="EMD-38630"/>
<dbReference type="EMDB" id="EMD-38631"/>
<dbReference type="EMDB" id="EMD-5513"/>
<dbReference type="SMR" id="Q9UQ80"/>
<dbReference type="BioGRID" id="111075">
    <property type="interactions" value="293"/>
</dbReference>
<dbReference type="CORUM" id="Q9UQ80"/>
<dbReference type="DIP" id="DIP-31275N"/>
<dbReference type="ELM" id="Q9UQ80"/>
<dbReference type="FunCoup" id="Q9UQ80">
    <property type="interactions" value="3553"/>
</dbReference>
<dbReference type="IntAct" id="Q9UQ80">
    <property type="interactions" value="155"/>
</dbReference>
<dbReference type="MINT" id="Q9UQ80"/>
<dbReference type="STRING" id="9606.ENSP00000302886"/>
<dbReference type="MEROPS" id="M24.973"/>
<dbReference type="GlyGen" id="Q9UQ80">
    <property type="glycosylation" value="2 sites, 1 O-linked glycan (2 sites)"/>
</dbReference>
<dbReference type="iPTMnet" id="Q9UQ80"/>
<dbReference type="MetOSite" id="Q9UQ80"/>
<dbReference type="PhosphoSitePlus" id="Q9UQ80"/>
<dbReference type="SwissPalm" id="Q9UQ80"/>
<dbReference type="BioMuta" id="PA2G4"/>
<dbReference type="DMDM" id="13632817"/>
<dbReference type="jPOST" id="Q9UQ80"/>
<dbReference type="MassIVE" id="Q9UQ80"/>
<dbReference type="PaxDb" id="9606-ENSP00000302886"/>
<dbReference type="PeptideAtlas" id="Q9UQ80"/>
<dbReference type="ProteomicsDB" id="85517">
    <molecule id="Q9UQ80-1"/>
</dbReference>
<dbReference type="Pumba" id="Q9UQ80"/>
<dbReference type="Antibodypedia" id="3192">
    <property type="antibodies" value="446 antibodies from 36 providers"/>
</dbReference>
<dbReference type="DNASU" id="5036"/>
<dbReference type="Ensembl" id="ENST00000303305.11">
    <molecule id="Q9UQ80-1"/>
    <property type="protein sequence ID" value="ENSP00000302886.6"/>
    <property type="gene ID" value="ENSG00000170515.14"/>
</dbReference>
<dbReference type="GeneID" id="5036"/>
<dbReference type="KEGG" id="hsa:5036"/>
<dbReference type="MANE-Select" id="ENST00000303305.11">
    <property type="protein sequence ID" value="ENSP00000302886.6"/>
    <property type="RefSeq nucleotide sequence ID" value="NM_006191.3"/>
    <property type="RefSeq protein sequence ID" value="NP_006182.2"/>
</dbReference>
<dbReference type="UCSC" id="uc001sjm.4">
    <molecule id="Q9UQ80-1"/>
    <property type="organism name" value="human"/>
</dbReference>
<dbReference type="AGR" id="HGNC:8550"/>
<dbReference type="CTD" id="5036"/>
<dbReference type="DisGeNET" id="5036"/>
<dbReference type="GeneCards" id="PA2G4"/>
<dbReference type="HGNC" id="HGNC:8550">
    <property type="gene designation" value="PA2G4"/>
</dbReference>
<dbReference type="HPA" id="ENSG00000170515">
    <property type="expression patterns" value="Low tissue specificity"/>
</dbReference>
<dbReference type="MIM" id="602145">
    <property type="type" value="gene"/>
</dbReference>
<dbReference type="neXtProt" id="NX_Q9UQ80"/>
<dbReference type="OpenTargets" id="ENSG00000170515"/>
<dbReference type="PharmGKB" id="PA32877"/>
<dbReference type="VEuPathDB" id="HostDB:ENSG00000170515"/>
<dbReference type="eggNOG" id="KOG2776">
    <property type="taxonomic scope" value="Eukaryota"/>
</dbReference>
<dbReference type="GeneTree" id="ENSGT00940000154281"/>
<dbReference type="HOGENOM" id="CLU_041451_2_1_1"/>
<dbReference type="InParanoid" id="Q9UQ80"/>
<dbReference type="OMA" id="MAIQECA"/>
<dbReference type="OrthoDB" id="5876363at2759"/>
<dbReference type="PAN-GO" id="Q9UQ80">
    <property type="GO annotations" value="0 GO annotations based on evolutionary models"/>
</dbReference>
<dbReference type="PhylomeDB" id="Q9UQ80"/>
<dbReference type="TreeFam" id="TF300010"/>
<dbReference type="PathwayCommons" id="Q9UQ80"/>
<dbReference type="Reactome" id="R-HSA-6798695">
    <property type="pathway name" value="Neutrophil degranulation"/>
</dbReference>
<dbReference type="SignaLink" id="Q9UQ80"/>
<dbReference type="SIGNOR" id="Q9UQ80"/>
<dbReference type="BioGRID-ORCS" id="5036">
    <property type="hits" value="228 hits in 1137 CRISPR screens"/>
</dbReference>
<dbReference type="CD-CODE" id="91857CE7">
    <property type="entry name" value="Nucleolus"/>
</dbReference>
<dbReference type="ChiTaRS" id="PA2G4">
    <property type="organism name" value="human"/>
</dbReference>
<dbReference type="EvolutionaryTrace" id="Q9UQ80"/>
<dbReference type="GeneWiki" id="PA2G4"/>
<dbReference type="GenomeRNAi" id="5036"/>
<dbReference type="Pharos" id="Q9UQ80">
    <property type="development level" value="Tbio"/>
</dbReference>
<dbReference type="PRO" id="PR:Q9UQ80"/>
<dbReference type="Proteomes" id="UP000005640">
    <property type="component" value="Chromosome 12"/>
</dbReference>
<dbReference type="RNAct" id="Q9UQ80">
    <property type="molecule type" value="protein"/>
</dbReference>
<dbReference type="Bgee" id="ENSG00000170515">
    <property type="expression patterns" value="Expressed in skin of leg and 215 other cell types or tissues"/>
</dbReference>
<dbReference type="ExpressionAtlas" id="Q9UQ80">
    <property type="expression patterns" value="baseline and differential"/>
</dbReference>
<dbReference type="GO" id="GO:0035578">
    <property type="term" value="C:azurophil granule lumen"/>
    <property type="evidence" value="ECO:0000304"/>
    <property type="project" value="Reactome"/>
</dbReference>
<dbReference type="GO" id="GO:0005737">
    <property type="term" value="C:cytoplasm"/>
    <property type="evidence" value="ECO:0000314"/>
    <property type="project" value="UniProtKB"/>
</dbReference>
<dbReference type="GO" id="GO:0070062">
    <property type="term" value="C:extracellular exosome"/>
    <property type="evidence" value="ECO:0007005"/>
    <property type="project" value="UniProtKB"/>
</dbReference>
<dbReference type="GO" id="GO:0005576">
    <property type="term" value="C:extracellular region"/>
    <property type="evidence" value="ECO:0000304"/>
    <property type="project" value="Reactome"/>
</dbReference>
<dbReference type="GO" id="GO:0016020">
    <property type="term" value="C:membrane"/>
    <property type="evidence" value="ECO:0007005"/>
    <property type="project" value="UniProtKB"/>
</dbReference>
<dbReference type="GO" id="GO:0005730">
    <property type="term" value="C:nucleolus"/>
    <property type="evidence" value="ECO:0000314"/>
    <property type="project" value="UniProtKB"/>
</dbReference>
<dbReference type="GO" id="GO:0005634">
    <property type="term" value="C:nucleus"/>
    <property type="evidence" value="ECO:0000314"/>
    <property type="project" value="MGI"/>
</dbReference>
<dbReference type="GO" id="GO:1990904">
    <property type="term" value="C:ribonucleoprotein complex"/>
    <property type="evidence" value="ECO:0007669"/>
    <property type="project" value="UniProtKB-KW"/>
</dbReference>
<dbReference type="GO" id="GO:0003676">
    <property type="term" value="F:nucleic acid binding"/>
    <property type="evidence" value="ECO:0000314"/>
    <property type="project" value="MGI"/>
</dbReference>
<dbReference type="GO" id="GO:0003723">
    <property type="term" value="F:RNA binding"/>
    <property type="evidence" value="ECO:0007005"/>
    <property type="project" value="UniProtKB"/>
</dbReference>
<dbReference type="GO" id="GO:0003714">
    <property type="term" value="F:transcription corepressor activity"/>
    <property type="evidence" value="ECO:0000314"/>
    <property type="project" value="MGI"/>
</dbReference>
<dbReference type="GO" id="GO:0031625">
    <property type="term" value="F:ubiquitin protein ligase binding"/>
    <property type="evidence" value="ECO:0000353"/>
    <property type="project" value="UniProtKB"/>
</dbReference>
<dbReference type="GO" id="GO:0043066">
    <property type="term" value="P:negative regulation of apoptotic process"/>
    <property type="evidence" value="ECO:0000250"/>
    <property type="project" value="UniProtKB"/>
</dbReference>
<dbReference type="GO" id="GO:0045892">
    <property type="term" value="P:negative regulation of DNA-templated transcription"/>
    <property type="evidence" value="ECO:0000314"/>
    <property type="project" value="MGI"/>
</dbReference>
<dbReference type="GO" id="GO:0045597">
    <property type="term" value="P:positive regulation of cell differentiation"/>
    <property type="evidence" value="ECO:0000250"/>
    <property type="project" value="UniProtKB"/>
</dbReference>
<dbReference type="GO" id="GO:0006417">
    <property type="term" value="P:regulation of translation"/>
    <property type="evidence" value="ECO:0007669"/>
    <property type="project" value="UniProtKB-KW"/>
</dbReference>
<dbReference type="GO" id="GO:0006364">
    <property type="term" value="P:rRNA processing"/>
    <property type="evidence" value="ECO:0007669"/>
    <property type="project" value="UniProtKB-KW"/>
</dbReference>
<dbReference type="CDD" id="cd01089">
    <property type="entry name" value="PA2G4-like"/>
    <property type="match status" value="1"/>
</dbReference>
<dbReference type="FunFam" id="1.10.10.10:FF:000029">
    <property type="entry name" value="Proliferation-associated 2G4, a"/>
    <property type="match status" value="1"/>
</dbReference>
<dbReference type="FunFam" id="3.90.230.10:FF:000008">
    <property type="entry name" value="Proliferation-associated 2G4, b"/>
    <property type="match status" value="1"/>
</dbReference>
<dbReference type="FunFam" id="3.90.230.10:FF:000031">
    <property type="entry name" value="Proliferation-associated 2G4-like protein"/>
    <property type="match status" value="1"/>
</dbReference>
<dbReference type="Gene3D" id="3.90.230.10">
    <property type="entry name" value="Creatinase/methionine aminopeptidase superfamily"/>
    <property type="match status" value="1"/>
</dbReference>
<dbReference type="Gene3D" id="1.10.10.10">
    <property type="entry name" value="Winged helix-like DNA-binding domain superfamily/Winged helix DNA-binding domain"/>
    <property type="match status" value="1"/>
</dbReference>
<dbReference type="InterPro" id="IPR036005">
    <property type="entry name" value="Creatinase/aminopeptidase-like"/>
</dbReference>
<dbReference type="InterPro" id="IPR004545">
    <property type="entry name" value="PA2G4"/>
</dbReference>
<dbReference type="InterPro" id="IPR047113">
    <property type="entry name" value="PA2G4/ARX1"/>
</dbReference>
<dbReference type="InterPro" id="IPR000994">
    <property type="entry name" value="Pept_M24"/>
</dbReference>
<dbReference type="InterPro" id="IPR018349">
    <property type="entry name" value="Pept_M24A_MAP2_BS"/>
</dbReference>
<dbReference type="InterPro" id="IPR036388">
    <property type="entry name" value="WH-like_DNA-bd_sf"/>
</dbReference>
<dbReference type="InterPro" id="IPR036390">
    <property type="entry name" value="WH_DNA-bd_sf"/>
</dbReference>
<dbReference type="NCBIfam" id="TIGR00495">
    <property type="entry name" value="crvDNA_42K"/>
    <property type="match status" value="1"/>
</dbReference>
<dbReference type="PANTHER" id="PTHR10804:SF11">
    <property type="entry name" value="PROLIFERATION-ASSOCIATED PROTEIN 2G4"/>
    <property type="match status" value="1"/>
</dbReference>
<dbReference type="PANTHER" id="PTHR10804">
    <property type="entry name" value="PROTEASE FAMILY M24 METHIONYL AMINOPEPTIDASE, AMINOPEPTIDASE P"/>
    <property type="match status" value="1"/>
</dbReference>
<dbReference type="Pfam" id="PF00557">
    <property type="entry name" value="Peptidase_M24"/>
    <property type="match status" value="1"/>
</dbReference>
<dbReference type="SUPFAM" id="SSF55920">
    <property type="entry name" value="Creatinase/aminopeptidase"/>
    <property type="match status" value="1"/>
</dbReference>
<dbReference type="SUPFAM" id="SSF46785">
    <property type="entry name" value="Winged helix' DNA-binding domain"/>
    <property type="match status" value="1"/>
</dbReference>
<dbReference type="PROSITE" id="PS01202">
    <property type="entry name" value="MAP_2"/>
    <property type="match status" value="1"/>
</dbReference>
<feature type="initiator methionine" description="Removed" evidence="14 22 24 25 26 27">
    <location>
        <position position="1"/>
    </location>
</feature>
<feature type="chain" id="PRO_0000148989" description="Proliferation-associated protein 2G4">
    <location>
        <begin position="2"/>
        <end position="394"/>
    </location>
</feature>
<feature type="region of interest" description="Necessary for nucleolar localization" evidence="8">
    <location>
        <begin position="2"/>
        <end position="48"/>
    </location>
</feature>
<feature type="region of interest" description="RNA-binding" evidence="8">
    <location>
        <begin position="46"/>
        <end position="54"/>
    </location>
</feature>
<feature type="region of interest" description="Necessary for nucleolar localization" evidence="8">
    <location>
        <begin position="301"/>
        <end position="394"/>
    </location>
</feature>
<feature type="region of interest" description="Disordered" evidence="3">
    <location>
        <begin position="358"/>
        <end position="394"/>
    </location>
</feature>
<feature type="region of interest" description="Interaction with RNA" evidence="1">
    <location>
        <begin position="361"/>
        <end position="375"/>
    </location>
</feature>
<feature type="compositionally biased region" description="Basic residues" evidence="3">
    <location>
        <begin position="365"/>
        <end position="375"/>
    </location>
</feature>
<feature type="modified residue" description="N-acetylserine" evidence="14 22 24 25 26 27">
    <location>
        <position position="2"/>
    </location>
</feature>
<feature type="modified residue" description="Phosphoserine" evidence="20 24 25 28">
    <location>
        <position position="2"/>
    </location>
</feature>
<feature type="modified residue" description="Phosphoserine" evidence="28">
    <location>
        <position position="335"/>
    </location>
</feature>
<feature type="modified residue" description="Phosphoserine; by PKC/PRKCD" evidence="10 21 24 28">
    <location>
        <position position="361"/>
    </location>
</feature>
<feature type="modified residue" description="Phosphothreonine" evidence="17">
    <location>
        <position position="366"/>
    </location>
</feature>
<feature type="modified residue" description="Phosphothreonine" evidence="19 20 21 23 24 25">
    <location>
        <position position="386"/>
    </location>
</feature>
<feature type="cross-link" description="Glycyl lysine isopeptide (Lys-Gly) (interchain with G-Cter in SUMO2)" evidence="29">
    <location>
        <position position="298"/>
    </location>
</feature>
<feature type="splice variant" id="VSP_057325" description="In isoform 2." evidence="10">
    <location>
        <begin position="1"/>
        <end position="54"/>
    </location>
</feature>
<feature type="mutagenesis site" description="Loss of nucleolar localization." evidence="8">
    <original>KYK</original>
    <variation>AYA</variation>
    <location>
        <begin position="20"/>
        <end position="22"/>
    </location>
</feature>
<feature type="mutagenesis site" description="Loss of phosphorylation and interaction with ERBB3 and HUWE1." evidence="10">
    <original>S</original>
    <variation>A</variation>
    <location>
        <position position="361"/>
    </location>
</feature>
<feature type="mutagenesis site" description="No effect on phosphorylation and loss of nucleolar localization." evidence="10">
    <original>S</original>
    <variation>D</variation>
    <location>
        <position position="361"/>
    </location>
</feature>
<feature type="mutagenesis site" description="No effect on in vitro phosphorylation by PKC." evidence="6">
    <original>S</original>
    <variation>A</variation>
    <location>
        <position position="363"/>
    </location>
</feature>
<feature type="mutagenesis site" description="Only partial nucleolar localization." evidence="8">
    <original>RK</original>
    <variation>AA</variation>
    <location>
        <begin position="364"/>
        <end position="365"/>
    </location>
</feature>
<feature type="mutagenesis site" description="Decreases in vitro phosphorylation by PKC." evidence="6">
    <original>T</original>
    <variation>A</variation>
    <location>
        <position position="366"/>
    </location>
</feature>
<feature type="sequence conflict" description="In Ref. 1; AAB91536." evidence="16" ref="1">
    <original>A</original>
    <variation>P</variation>
    <location>
        <position position="381"/>
    </location>
</feature>
<feature type="helix" evidence="30">
    <location>
        <begin position="15"/>
        <end position="38"/>
    </location>
</feature>
<feature type="helix" evidence="30">
    <location>
        <begin position="45"/>
        <end position="61"/>
    </location>
</feature>
<feature type="strand" evidence="30">
    <location>
        <begin position="72"/>
        <end position="82"/>
    </location>
</feature>
<feature type="strand" evidence="30">
    <location>
        <begin position="85"/>
        <end position="87"/>
    </location>
</feature>
<feature type="strand" evidence="30">
    <location>
        <begin position="105"/>
        <end position="114"/>
    </location>
</feature>
<feature type="strand" evidence="30">
    <location>
        <begin position="117"/>
        <end position="126"/>
    </location>
</feature>
<feature type="helix" evidence="30">
    <location>
        <begin position="137"/>
        <end position="156"/>
    </location>
</feature>
<feature type="helix" evidence="30">
    <location>
        <begin position="163"/>
        <end position="175"/>
    </location>
</feature>
<feature type="turn" evidence="30">
    <location>
        <begin position="176"/>
        <end position="178"/>
    </location>
</feature>
<feature type="strand" evidence="30">
    <location>
        <begin position="186"/>
        <end position="191"/>
    </location>
</feature>
<feature type="strand" evidence="30">
    <location>
        <begin position="194"/>
        <end position="196"/>
    </location>
</feature>
<feature type="strand" evidence="30">
    <location>
        <begin position="200"/>
        <end position="204"/>
    </location>
</feature>
<feature type="helix" evidence="30">
    <location>
        <begin position="207"/>
        <end position="212"/>
    </location>
</feature>
<feature type="strand" evidence="30">
    <location>
        <begin position="223"/>
        <end position="233"/>
    </location>
</feature>
<feature type="strand" evidence="30">
    <location>
        <begin position="246"/>
        <end position="249"/>
    </location>
</feature>
<feature type="helix" evidence="30">
    <location>
        <begin position="260"/>
        <end position="273"/>
    </location>
</feature>
<feature type="helix" evidence="30">
    <location>
        <begin position="280"/>
        <end position="282"/>
    </location>
</feature>
<feature type="strand" evidence="31">
    <location>
        <begin position="283"/>
        <end position="285"/>
    </location>
</feature>
<feature type="helix" evidence="30">
    <location>
        <begin position="287"/>
        <end position="298"/>
    </location>
</feature>
<feature type="strand" evidence="30">
    <location>
        <begin position="301"/>
        <end position="305"/>
    </location>
</feature>
<feature type="strand" evidence="30">
    <location>
        <begin position="316"/>
        <end position="326"/>
    </location>
</feature>
<feature type="strand" evidence="30">
    <location>
        <begin position="329"/>
        <end position="332"/>
    </location>
</feature>
<feature type="helix" evidence="30">
    <location>
        <begin position="340"/>
        <end position="342"/>
    </location>
</feature>
<feature type="helix" evidence="30">
    <location>
        <begin position="352"/>
        <end position="359"/>
    </location>
</feature>